<sequence length="304" mass="34564">MNQHTLLPKKTERLQYFGSVSPIKGEKPVEKEKMKDLQNIRKDYFFDIQHVGVANVSHPVTITSAMMPAEQTTAANFTMTCNLPRNQKGINMSRLTELLQVYHQNGWILSFSSLQQFTKELAENMDTSSATVEVRFPWFFERKSPKLEKAGLMHADIFMSVTYRKDQPFKQRAGISAKVTTLCPCSKEISEYSAHNQRGTVSIWADIHPAASLPSDVKADLLHAAESNASARLHPVLKRPDEKAVTETAYENPRFVEDLARLIAADLFELEWVSAFEIECRNEESIHLHDAYAKLCFSKEVDKI</sequence>
<keyword id="KW-0378">Hydrolase</keyword>
<keyword id="KW-1185">Reference proteome</keyword>
<reference key="1">
    <citation type="journal article" date="1996" name="Microbiology">
        <title>The 25 degrees-36 degrees region of the Bacillus subtilis chromosome: determination of the sequence of a 146 kb segment and identification of 113 genes.</title>
        <authorList>
            <person name="Yamane K."/>
            <person name="Kumano M."/>
            <person name="Kurita K."/>
        </authorList>
    </citation>
    <scope>NUCLEOTIDE SEQUENCE [GENOMIC DNA]</scope>
    <source>
        <strain>168</strain>
    </source>
</reference>
<reference key="2">
    <citation type="journal article" date="1997" name="Nature">
        <title>The complete genome sequence of the Gram-positive bacterium Bacillus subtilis.</title>
        <authorList>
            <person name="Kunst F."/>
            <person name="Ogasawara N."/>
            <person name="Moszer I."/>
            <person name="Albertini A.M."/>
            <person name="Alloni G."/>
            <person name="Azevedo V."/>
            <person name="Bertero M.G."/>
            <person name="Bessieres P."/>
            <person name="Bolotin A."/>
            <person name="Borchert S."/>
            <person name="Borriss R."/>
            <person name="Boursier L."/>
            <person name="Brans A."/>
            <person name="Braun M."/>
            <person name="Brignell S.C."/>
            <person name="Bron S."/>
            <person name="Brouillet S."/>
            <person name="Bruschi C.V."/>
            <person name="Caldwell B."/>
            <person name="Capuano V."/>
            <person name="Carter N.M."/>
            <person name="Choi S.-K."/>
            <person name="Codani J.-J."/>
            <person name="Connerton I.F."/>
            <person name="Cummings N.J."/>
            <person name="Daniel R.A."/>
            <person name="Denizot F."/>
            <person name="Devine K.M."/>
            <person name="Duesterhoeft A."/>
            <person name="Ehrlich S.D."/>
            <person name="Emmerson P.T."/>
            <person name="Entian K.-D."/>
            <person name="Errington J."/>
            <person name="Fabret C."/>
            <person name="Ferrari E."/>
            <person name="Foulger D."/>
            <person name="Fritz C."/>
            <person name="Fujita M."/>
            <person name="Fujita Y."/>
            <person name="Fuma S."/>
            <person name="Galizzi A."/>
            <person name="Galleron N."/>
            <person name="Ghim S.-Y."/>
            <person name="Glaser P."/>
            <person name="Goffeau A."/>
            <person name="Golightly E.J."/>
            <person name="Grandi G."/>
            <person name="Guiseppi G."/>
            <person name="Guy B.J."/>
            <person name="Haga K."/>
            <person name="Haiech J."/>
            <person name="Harwood C.R."/>
            <person name="Henaut A."/>
            <person name="Hilbert H."/>
            <person name="Holsappel S."/>
            <person name="Hosono S."/>
            <person name="Hullo M.-F."/>
            <person name="Itaya M."/>
            <person name="Jones L.-M."/>
            <person name="Joris B."/>
            <person name="Karamata D."/>
            <person name="Kasahara Y."/>
            <person name="Klaerr-Blanchard M."/>
            <person name="Klein C."/>
            <person name="Kobayashi Y."/>
            <person name="Koetter P."/>
            <person name="Koningstein G."/>
            <person name="Krogh S."/>
            <person name="Kumano M."/>
            <person name="Kurita K."/>
            <person name="Lapidus A."/>
            <person name="Lardinois S."/>
            <person name="Lauber J."/>
            <person name="Lazarevic V."/>
            <person name="Lee S.-M."/>
            <person name="Levine A."/>
            <person name="Liu H."/>
            <person name="Masuda S."/>
            <person name="Mauel C."/>
            <person name="Medigue C."/>
            <person name="Medina N."/>
            <person name="Mellado R.P."/>
            <person name="Mizuno M."/>
            <person name="Moestl D."/>
            <person name="Nakai S."/>
            <person name="Noback M."/>
            <person name="Noone D."/>
            <person name="O'Reilly M."/>
            <person name="Ogawa K."/>
            <person name="Ogiwara A."/>
            <person name="Oudega B."/>
            <person name="Park S.-H."/>
            <person name="Parro V."/>
            <person name="Pohl T.M."/>
            <person name="Portetelle D."/>
            <person name="Porwollik S."/>
            <person name="Prescott A.M."/>
            <person name="Presecan E."/>
            <person name="Pujic P."/>
            <person name="Purnelle B."/>
            <person name="Rapoport G."/>
            <person name="Rey M."/>
            <person name="Reynolds S."/>
            <person name="Rieger M."/>
            <person name="Rivolta C."/>
            <person name="Rocha E."/>
            <person name="Roche B."/>
            <person name="Rose M."/>
            <person name="Sadaie Y."/>
            <person name="Sato T."/>
            <person name="Scanlan E."/>
            <person name="Schleich S."/>
            <person name="Schroeter R."/>
            <person name="Scoffone F."/>
            <person name="Sekiguchi J."/>
            <person name="Sekowska A."/>
            <person name="Seror S.J."/>
            <person name="Serror P."/>
            <person name="Shin B.-S."/>
            <person name="Soldo B."/>
            <person name="Sorokin A."/>
            <person name="Tacconi E."/>
            <person name="Takagi T."/>
            <person name="Takahashi H."/>
            <person name="Takemaru K."/>
            <person name="Takeuchi M."/>
            <person name="Tamakoshi A."/>
            <person name="Tanaka T."/>
            <person name="Terpstra P."/>
            <person name="Tognoni A."/>
            <person name="Tosato V."/>
            <person name="Uchiyama S."/>
            <person name="Vandenbol M."/>
            <person name="Vannier F."/>
            <person name="Vassarotti A."/>
            <person name="Viari A."/>
            <person name="Wambutt R."/>
            <person name="Wedler E."/>
            <person name="Wedler H."/>
            <person name="Weitzenegger T."/>
            <person name="Winters P."/>
            <person name="Wipat A."/>
            <person name="Yamamoto H."/>
            <person name="Yamane K."/>
            <person name="Yasumoto K."/>
            <person name="Yata K."/>
            <person name="Yoshida K."/>
            <person name="Yoshikawa H.-F."/>
            <person name="Zumstein E."/>
            <person name="Yoshikawa H."/>
            <person name="Danchin A."/>
        </authorList>
    </citation>
    <scope>NUCLEOTIDE SEQUENCE [LARGE SCALE GENOMIC DNA]</scope>
    <source>
        <strain>168</strain>
    </source>
</reference>
<reference key="3">
    <citation type="journal article" date="2009" name="Microbiology">
        <title>From a consortium sequence to a unified sequence: the Bacillus subtilis 168 reference genome a decade later.</title>
        <authorList>
            <person name="Barbe V."/>
            <person name="Cruveiller S."/>
            <person name="Kunst F."/>
            <person name="Lenoble P."/>
            <person name="Meurice G."/>
            <person name="Sekowska A."/>
            <person name="Vallenet D."/>
            <person name="Wang T."/>
            <person name="Moszer I."/>
            <person name="Medigue C."/>
            <person name="Danchin A."/>
        </authorList>
    </citation>
    <scope>SEQUENCE REVISION TO 202-209; 222 AND 290-295</scope>
</reference>
<reference key="4">
    <citation type="journal article" date="2002" name="J. Bacteriol.">
        <title>Functional analysis of the Bacillus subtilis Zur regulon.</title>
        <authorList>
            <person name="Gaballa A."/>
            <person name="Wang T."/>
            <person name="Ye R.W."/>
            <person name="Helmann J.D."/>
        </authorList>
    </citation>
    <scope>INDUCTION</scope>
    <source>
        <strain>168</strain>
    </source>
</reference>
<reference key="5">
    <citation type="journal article" date="2006" name="J. Biol. Chem.">
        <title>Discovery of a new prokaryotic type I GTP cyclohydrolase family.</title>
        <authorList>
            <person name="El Yacoubi B."/>
            <person name="Bonnett S."/>
            <person name="Anderson J.N."/>
            <person name="Swairjo M.A."/>
            <person name="Iwata-Reuyl D."/>
            <person name="de Crecy-Lagard V."/>
        </authorList>
    </citation>
    <scope>FUNCTION</scope>
    <scope>CATALYTIC ACTIVITY</scope>
</reference>
<comment type="function">
    <text evidence="3">Converts GTP to 7,8-dihydroneopterin triphosphate.</text>
</comment>
<comment type="catalytic activity">
    <reaction evidence="3">
        <text>GTP + H2O = 7,8-dihydroneopterin 3'-triphosphate + formate + H(+)</text>
        <dbReference type="Rhea" id="RHEA:17473"/>
        <dbReference type="ChEBI" id="CHEBI:15377"/>
        <dbReference type="ChEBI" id="CHEBI:15378"/>
        <dbReference type="ChEBI" id="CHEBI:15740"/>
        <dbReference type="ChEBI" id="CHEBI:37565"/>
        <dbReference type="ChEBI" id="CHEBI:58462"/>
        <dbReference type="EC" id="3.5.4.16"/>
    </reaction>
</comment>
<comment type="pathway">
    <text>Cofactor biosynthesis; 7,8-dihydroneopterin triphosphate biosynthesis; 7,8-dihydroneopterin triphosphate from GTP: step 1/1.</text>
</comment>
<comment type="induction">
    <text evidence="2">Repressed by zinc, via zur.</text>
</comment>
<comment type="similarity">
    <text evidence="4">Belongs to the GTP cyclohydrolase IV family.</text>
</comment>
<comment type="caution">
    <text evidence="5">Was originally thought to be a zinc uptake system.</text>
</comment>
<dbReference type="EC" id="3.5.4.16"/>
<dbReference type="EMBL" id="D50453">
    <property type="protein sequence ID" value="BAA08968.1"/>
    <property type="molecule type" value="Genomic_DNA"/>
</dbReference>
<dbReference type="EMBL" id="AL009126">
    <property type="protein sequence ID" value="CAB12128.2"/>
    <property type="molecule type" value="Genomic_DNA"/>
</dbReference>
<dbReference type="PIR" id="H69759">
    <property type="entry name" value="H69759"/>
</dbReference>
<dbReference type="RefSeq" id="WP_003246378.1">
    <property type="nucleotide sequence ID" value="NZ_OZ025638.1"/>
</dbReference>
<dbReference type="SMR" id="P94398"/>
<dbReference type="FunCoup" id="P94398">
    <property type="interactions" value="218"/>
</dbReference>
<dbReference type="IntAct" id="P94398">
    <property type="interactions" value="1"/>
</dbReference>
<dbReference type="MINT" id="P94398"/>
<dbReference type="STRING" id="224308.BSU03340"/>
<dbReference type="TCDB" id="9.B.10.1.1">
    <property type="family name" value="the putative tripartite zn(2+) transporter (tzt) family"/>
</dbReference>
<dbReference type="PaxDb" id="224308-BSU03340"/>
<dbReference type="EnsemblBacteria" id="CAB12128">
    <property type="protein sequence ID" value="CAB12128"/>
    <property type="gene ID" value="BSU_03340"/>
</dbReference>
<dbReference type="GeneID" id="938325"/>
<dbReference type="KEGG" id="bsu:BSU03340"/>
<dbReference type="PATRIC" id="fig|224308.179.peg.348"/>
<dbReference type="eggNOG" id="COG1469">
    <property type="taxonomic scope" value="Bacteria"/>
</dbReference>
<dbReference type="InParanoid" id="P94398"/>
<dbReference type="OrthoDB" id="9774824at2"/>
<dbReference type="PhylomeDB" id="P94398"/>
<dbReference type="BioCyc" id="BSUB:BSU03340-MONOMER"/>
<dbReference type="UniPathway" id="UPA00848">
    <property type="reaction ID" value="UER00151"/>
</dbReference>
<dbReference type="Proteomes" id="UP000001570">
    <property type="component" value="Chromosome"/>
</dbReference>
<dbReference type="GO" id="GO:0003933">
    <property type="term" value="F:GTP cyclohydrolase activity"/>
    <property type="evidence" value="ECO:0000318"/>
    <property type="project" value="GO_Central"/>
</dbReference>
<dbReference type="GO" id="GO:0003934">
    <property type="term" value="F:GTP cyclohydrolase I activity"/>
    <property type="evidence" value="ECO:0007669"/>
    <property type="project" value="UniProtKB-UniRule"/>
</dbReference>
<dbReference type="GO" id="GO:0046654">
    <property type="term" value="P:tetrahydrofolate biosynthetic process"/>
    <property type="evidence" value="ECO:0007669"/>
    <property type="project" value="UniProtKB-UniRule"/>
</dbReference>
<dbReference type="Gene3D" id="3.10.270.10">
    <property type="entry name" value="Urate Oxidase"/>
    <property type="match status" value="1"/>
</dbReference>
<dbReference type="HAMAP" id="MF_01527_B">
    <property type="entry name" value="GTP_cyclohydrol_B"/>
    <property type="match status" value="1"/>
</dbReference>
<dbReference type="InterPro" id="IPR022838">
    <property type="entry name" value="GTP_cyclohydrolase_FolE2"/>
</dbReference>
<dbReference type="InterPro" id="IPR003801">
    <property type="entry name" value="GTP_cyclohydrolase_FolE2/MptA"/>
</dbReference>
<dbReference type="NCBIfam" id="NF010200">
    <property type="entry name" value="PRK13674.1-1"/>
    <property type="match status" value="1"/>
</dbReference>
<dbReference type="PANTHER" id="PTHR36445">
    <property type="entry name" value="GTP CYCLOHYDROLASE MPTA"/>
    <property type="match status" value="1"/>
</dbReference>
<dbReference type="PANTHER" id="PTHR36445:SF1">
    <property type="entry name" value="GTP CYCLOHYDROLASE MPTA"/>
    <property type="match status" value="1"/>
</dbReference>
<dbReference type="Pfam" id="PF02649">
    <property type="entry name" value="GCHY-1"/>
    <property type="match status" value="1"/>
</dbReference>
<gene>
    <name type="primary">folE2</name>
    <name type="synonym">yciA</name>
    <name type="ordered locus">BSU03340</name>
</gene>
<evidence type="ECO:0000250" key="1"/>
<evidence type="ECO:0000269" key="2">
    <source>
    </source>
</evidence>
<evidence type="ECO:0000269" key="3">
    <source>
    </source>
</evidence>
<evidence type="ECO:0000305" key="4"/>
<evidence type="ECO:0000305" key="5">
    <source>
    </source>
</evidence>
<organism>
    <name type="scientific">Bacillus subtilis (strain 168)</name>
    <dbReference type="NCBI Taxonomy" id="224308"/>
    <lineage>
        <taxon>Bacteria</taxon>
        <taxon>Bacillati</taxon>
        <taxon>Bacillota</taxon>
        <taxon>Bacilli</taxon>
        <taxon>Bacillales</taxon>
        <taxon>Bacillaceae</taxon>
        <taxon>Bacillus</taxon>
    </lineage>
</organism>
<proteinExistence type="evidence at protein level"/>
<protein>
    <recommendedName>
        <fullName>GTP cyclohydrolase FolE2</fullName>
        <ecNumber>3.5.4.16</ecNumber>
    </recommendedName>
    <alternativeName>
        <fullName>GTP cyclohydrolase 1B</fullName>
    </alternativeName>
</protein>
<name>GCH4_BACSU</name>
<accession>P94398</accession>
<accession>Q797Q1</accession>
<feature type="chain" id="PRO_0000147701" description="GTP cyclohydrolase FolE2">
    <location>
        <begin position="1"/>
        <end position="304"/>
    </location>
</feature>
<feature type="site" description="May be catalytically important" evidence="1">
    <location>
        <position position="183"/>
    </location>
</feature>
<feature type="sequence conflict" description="In Ref. 1; BAA08968." evidence="4" ref="1">
    <original>SIWADIHP</original>
    <variation>KHLGRIFTR</variation>
    <location>
        <begin position="202"/>
        <end position="209"/>
    </location>
</feature>
<feature type="sequence conflict" description="In Ref. 1; BAA08968." evidence="4" ref="1">
    <original>L</original>
    <variation>P</variation>
    <location>
        <position position="222"/>
    </location>
</feature>
<feature type="sequence conflict" description="In Ref. 1; BAA08968." evidence="4" ref="1">
    <original>DAYAKL</original>
    <variation>RCLCEV</variation>
    <location>
        <begin position="290"/>
        <end position="295"/>
    </location>
</feature>